<organism>
    <name type="scientific">Shewanella sp. (strain MR-7)</name>
    <dbReference type="NCBI Taxonomy" id="60481"/>
    <lineage>
        <taxon>Bacteria</taxon>
        <taxon>Pseudomonadati</taxon>
        <taxon>Pseudomonadota</taxon>
        <taxon>Gammaproteobacteria</taxon>
        <taxon>Alteromonadales</taxon>
        <taxon>Shewanellaceae</taxon>
        <taxon>Shewanella</taxon>
    </lineage>
</organism>
<feature type="chain" id="PRO_1000045740" description="Protein SlyX homolog">
    <location>
        <begin position="1"/>
        <end position="70"/>
    </location>
</feature>
<proteinExistence type="inferred from homology"/>
<protein>
    <recommendedName>
        <fullName evidence="1">Protein SlyX homolog</fullName>
    </recommendedName>
</protein>
<sequence>MQGVQEQIEELQMKMAFQELTVEELNQEVIKLNQLIAHQQHQIQLLIGKLKAMEPSNIATQAEETPPPHY</sequence>
<accession>Q0HY68</accession>
<reference key="1">
    <citation type="submission" date="2006-08" db="EMBL/GenBank/DDBJ databases">
        <title>Complete sequence of chromosome 1 of Shewanella sp. MR-7.</title>
        <authorList>
            <person name="Copeland A."/>
            <person name="Lucas S."/>
            <person name="Lapidus A."/>
            <person name="Barry K."/>
            <person name="Detter J.C."/>
            <person name="Glavina del Rio T."/>
            <person name="Hammon N."/>
            <person name="Israni S."/>
            <person name="Dalin E."/>
            <person name="Tice H."/>
            <person name="Pitluck S."/>
            <person name="Kiss H."/>
            <person name="Brettin T."/>
            <person name="Bruce D."/>
            <person name="Han C."/>
            <person name="Tapia R."/>
            <person name="Gilna P."/>
            <person name="Schmutz J."/>
            <person name="Larimer F."/>
            <person name="Land M."/>
            <person name="Hauser L."/>
            <person name="Kyrpides N."/>
            <person name="Mikhailova N."/>
            <person name="Nealson K."/>
            <person name="Konstantinidis K."/>
            <person name="Klappenbach J."/>
            <person name="Tiedje J."/>
            <person name="Richardson P."/>
        </authorList>
    </citation>
    <scope>NUCLEOTIDE SEQUENCE [LARGE SCALE GENOMIC DNA]</scope>
    <source>
        <strain>MR-7</strain>
    </source>
</reference>
<comment type="similarity">
    <text evidence="1">Belongs to the SlyX family.</text>
</comment>
<name>SLYX_SHESR</name>
<evidence type="ECO:0000255" key="1">
    <source>
        <dbReference type="HAMAP-Rule" id="MF_00715"/>
    </source>
</evidence>
<dbReference type="EMBL" id="CP000444">
    <property type="protein sequence ID" value="ABI41937.1"/>
    <property type="molecule type" value="Genomic_DNA"/>
</dbReference>
<dbReference type="SMR" id="Q0HY68"/>
<dbReference type="KEGG" id="shm:Shewmr7_0938"/>
<dbReference type="HOGENOM" id="CLU_180796_4_0_6"/>
<dbReference type="HAMAP" id="MF_00715">
    <property type="entry name" value="SlyX"/>
    <property type="match status" value="1"/>
</dbReference>
<dbReference type="InterPro" id="IPR007236">
    <property type="entry name" value="SlyX"/>
</dbReference>
<dbReference type="PANTHER" id="PTHR36508">
    <property type="entry name" value="PROTEIN SLYX"/>
    <property type="match status" value="1"/>
</dbReference>
<dbReference type="PANTHER" id="PTHR36508:SF1">
    <property type="entry name" value="PROTEIN SLYX"/>
    <property type="match status" value="1"/>
</dbReference>
<dbReference type="Pfam" id="PF04102">
    <property type="entry name" value="SlyX"/>
    <property type="match status" value="1"/>
</dbReference>
<gene>
    <name evidence="1" type="primary">slyX</name>
    <name type="ordered locus">Shewmr7_0938</name>
</gene>